<organism>
    <name type="scientific">Mycolicibacterium paratuberculosis (strain ATCC BAA-968 / K-10)</name>
    <name type="common">Mycobacterium paratuberculosis</name>
    <dbReference type="NCBI Taxonomy" id="262316"/>
    <lineage>
        <taxon>Bacteria</taxon>
        <taxon>Bacillati</taxon>
        <taxon>Actinomycetota</taxon>
        <taxon>Actinomycetes</taxon>
        <taxon>Mycobacteriales</taxon>
        <taxon>Mycobacteriaceae</taxon>
        <taxon>Mycobacterium</taxon>
        <taxon>Mycobacterium avium complex (MAC)</taxon>
    </lineage>
</organism>
<protein>
    <recommendedName>
        <fullName evidence="1">Serine hydroxymethyltransferase</fullName>
        <shortName evidence="1">SHMT</shortName>
        <shortName evidence="1">Serine methylase</shortName>
        <ecNumber evidence="1">2.1.2.1</ecNumber>
    </recommendedName>
</protein>
<sequence length="426" mass="44955">MSAPLADIDPDIAGLLGQELGRQRDTLEMIASENFVPRAVLQAQGSVLTNKYAEGLPGRRYYGGCEYVDVVENIARDRAKALFDADFANVQPHSGAQANAAVLHALMTPGERLLGLDLANGGHLTHGMKLNFSGKLYDVGFYGVDPTTHLIDMDAVRAKALEFRPKVIIAGWSAYPRVLDFAAFASIADEVGAKLWVDMAHFAGLVAAGLHPSPVPHADVVSTTVHKTLGGPRSGLILGKQEYAKSINSAVFPGQQGGPLMHVIAAKAVALKIAGTEEFADRQRRTLSGARILAERLSGADVAAAGVSVVSGGTDVHLVLVDLRNSELDGQAAEDLLHEIGITVNRNAVPNDPRPPMVTSGLRVGTPALATRGFGGAEFSEVADVIATALAGGRGADLAALRDRVTRLARDFPLYEGLEDWALVGR</sequence>
<comment type="function">
    <text evidence="1">Catalyzes the reversible interconversion of serine and glycine with tetrahydrofolate (THF) serving as the one-carbon carrier. This reaction serves as the major source of one-carbon groups required for the biosynthesis of purines, thymidylate, methionine, and other important biomolecules. Also exhibits THF-independent aldolase activity toward beta-hydroxyamino acids, producing glycine and aldehydes, via a retro-aldol mechanism.</text>
</comment>
<comment type="catalytic activity">
    <reaction evidence="1">
        <text>(6R)-5,10-methylene-5,6,7,8-tetrahydrofolate + glycine + H2O = (6S)-5,6,7,8-tetrahydrofolate + L-serine</text>
        <dbReference type="Rhea" id="RHEA:15481"/>
        <dbReference type="ChEBI" id="CHEBI:15377"/>
        <dbReference type="ChEBI" id="CHEBI:15636"/>
        <dbReference type="ChEBI" id="CHEBI:33384"/>
        <dbReference type="ChEBI" id="CHEBI:57305"/>
        <dbReference type="ChEBI" id="CHEBI:57453"/>
        <dbReference type="EC" id="2.1.2.1"/>
    </reaction>
</comment>
<comment type="cofactor">
    <cofactor evidence="1">
        <name>pyridoxal 5'-phosphate</name>
        <dbReference type="ChEBI" id="CHEBI:597326"/>
    </cofactor>
</comment>
<comment type="pathway">
    <text evidence="1">One-carbon metabolism; tetrahydrofolate interconversion.</text>
</comment>
<comment type="pathway">
    <text evidence="1">Amino-acid biosynthesis; glycine biosynthesis; glycine from L-serine: step 1/1.</text>
</comment>
<comment type="subunit">
    <text evidence="1">Homodimer.</text>
</comment>
<comment type="subcellular location">
    <subcellularLocation>
        <location evidence="1">Cytoplasm</location>
    </subcellularLocation>
</comment>
<comment type="similarity">
    <text evidence="1">Belongs to the SHMT family.</text>
</comment>
<accession>Q73WG1</accession>
<proteinExistence type="inferred from homology"/>
<reference key="1">
    <citation type="journal article" date="2005" name="Proc. Natl. Acad. Sci. U.S.A.">
        <title>The complete genome sequence of Mycobacterium avium subspecies paratuberculosis.</title>
        <authorList>
            <person name="Li L."/>
            <person name="Bannantine J.P."/>
            <person name="Zhang Q."/>
            <person name="Amonsin A."/>
            <person name="May B.J."/>
            <person name="Alt D."/>
            <person name="Banerji N."/>
            <person name="Kanjilal S."/>
            <person name="Kapur V."/>
        </authorList>
    </citation>
    <scope>NUCLEOTIDE SEQUENCE [LARGE SCALE GENOMIC DNA]</scope>
    <source>
        <strain>ATCC BAA-968 / K-10</strain>
    </source>
</reference>
<evidence type="ECO:0000255" key="1">
    <source>
        <dbReference type="HAMAP-Rule" id="MF_00051"/>
    </source>
</evidence>
<gene>
    <name evidence="1" type="primary">glyA</name>
    <name type="ordered locus">MAP_2699c</name>
</gene>
<keyword id="KW-0028">Amino-acid biosynthesis</keyword>
<keyword id="KW-0963">Cytoplasm</keyword>
<keyword id="KW-0554">One-carbon metabolism</keyword>
<keyword id="KW-0663">Pyridoxal phosphate</keyword>
<keyword id="KW-1185">Reference proteome</keyword>
<keyword id="KW-0808">Transferase</keyword>
<name>GLYA_MYCPA</name>
<dbReference type="EC" id="2.1.2.1" evidence="1"/>
<dbReference type="EMBL" id="AE016958">
    <property type="protein sequence ID" value="AAS05016.1"/>
    <property type="molecule type" value="Genomic_DNA"/>
</dbReference>
<dbReference type="RefSeq" id="WP_003878550.1">
    <property type="nucleotide sequence ID" value="NZ_CP106873.1"/>
</dbReference>
<dbReference type="SMR" id="Q73WG1"/>
<dbReference type="STRING" id="262316.MAP_2699c"/>
<dbReference type="KEGG" id="mpa:MAP_2699c"/>
<dbReference type="PATRIC" id="fig|262316.17.peg.2867"/>
<dbReference type="eggNOG" id="COG0112">
    <property type="taxonomic scope" value="Bacteria"/>
</dbReference>
<dbReference type="HOGENOM" id="CLU_022477_2_1_11"/>
<dbReference type="UniPathway" id="UPA00193"/>
<dbReference type="UniPathway" id="UPA00288">
    <property type="reaction ID" value="UER01023"/>
</dbReference>
<dbReference type="Proteomes" id="UP000000580">
    <property type="component" value="Chromosome"/>
</dbReference>
<dbReference type="GO" id="GO:0005829">
    <property type="term" value="C:cytosol"/>
    <property type="evidence" value="ECO:0007669"/>
    <property type="project" value="TreeGrafter"/>
</dbReference>
<dbReference type="GO" id="GO:0004372">
    <property type="term" value="F:glycine hydroxymethyltransferase activity"/>
    <property type="evidence" value="ECO:0007669"/>
    <property type="project" value="UniProtKB-UniRule"/>
</dbReference>
<dbReference type="GO" id="GO:0030170">
    <property type="term" value="F:pyridoxal phosphate binding"/>
    <property type="evidence" value="ECO:0007669"/>
    <property type="project" value="UniProtKB-UniRule"/>
</dbReference>
<dbReference type="GO" id="GO:0019264">
    <property type="term" value="P:glycine biosynthetic process from serine"/>
    <property type="evidence" value="ECO:0007669"/>
    <property type="project" value="UniProtKB-UniRule"/>
</dbReference>
<dbReference type="GO" id="GO:0035999">
    <property type="term" value="P:tetrahydrofolate interconversion"/>
    <property type="evidence" value="ECO:0007669"/>
    <property type="project" value="UniProtKB-UniRule"/>
</dbReference>
<dbReference type="CDD" id="cd00378">
    <property type="entry name" value="SHMT"/>
    <property type="match status" value="1"/>
</dbReference>
<dbReference type="FunFam" id="3.40.640.10:FF:000001">
    <property type="entry name" value="Serine hydroxymethyltransferase"/>
    <property type="match status" value="1"/>
</dbReference>
<dbReference type="Gene3D" id="3.90.1150.10">
    <property type="entry name" value="Aspartate Aminotransferase, domain 1"/>
    <property type="match status" value="1"/>
</dbReference>
<dbReference type="Gene3D" id="3.40.640.10">
    <property type="entry name" value="Type I PLP-dependent aspartate aminotransferase-like (Major domain)"/>
    <property type="match status" value="1"/>
</dbReference>
<dbReference type="HAMAP" id="MF_00051">
    <property type="entry name" value="SHMT"/>
    <property type="match status" value="1"/>
</dbReference>
<dbReference type="InterPro" id="IPR015424">
    <property type="entry name" value="PyrdxlP-dep_Trfase"/>
</dbReference>
<dbReference type="InterPro" id="IPR015421">
    <property type="entry name" value="PyrdxlP-dep_Trfase_major"/>
</dbReference>
<dbReference type="InterPro" id="IPR015422">
    <property type="entry name" value="PyrdxlP-dep_Trfase_small"/>
</dbReference>
<dbReference type="InterPro" id="IPR001085">
    <property type="entry name" value="Ser_HO-MeTrfase"/>
</dbReference>
<dbReference type="InterPro" id="IPR049943">
    <property type="entry name" value="Ser_HO-MeTrfase-like"/>
</dbReference>
<dbReference type="InterPro" id="IPR019798">
    <property type="entry name" value="Ser_HO-MeTrfase_PLP_BS"/>
</dbReference>
<dbReference type="InterPro" id="IPR039429">
    <property type="entry name" value="SHMT-like_dom"/>
</dbReference>
<dbReference type="NCBIfam" id="NF000586">
    <property type="entry name" value="PRK00011.1"/>
    <property type="match status" value="1"/>
</dbReference>
<dbReference type="PANTHER" id="PTHR11680">
    <property type="entry name" value="SERINE HYDROXYMETHYLTRANSFERASE"/>
    <property type="match status" value="1"/>
</dbReference>
<dbReference type="PANTHER" id="PTHR11680:SF35">
    <property type="entry name" value="SERINE HYDROXYMETHYLTRANSFERASE 1"/>
    <property type="match status" value="1"/>
</dbReference>
<dbReference type="Pfam" id="PF00464">
    <property type="entry name" value="SHMT"/>
    <property type="match status" value="1"/>
</dbReference>
<dbReference type="PIRSF" id="PIRSF000412">
    <property type="entry name" value="SHMT"/>
    <property type="match status" value="1"/>
</dbReference>
<dbReference type="SUPFAM" id="SSF53383">
    <property type="entry name" value="PLP-dependent transferases"/>
    <property type="match status" value="1"/>
</dbReference>
<dbReference type="PROSITE" id="PS00096">
    <property type="entry name" value="SHMT"/>
    <property type="match status" value="1"/>
</dbReference>
<feature type="chain" id="PRO_0000113614" description="Serine hydroxymethyltransferase">
    <location>
        <begin position="1"/>
        <end position="426"/>
    </location>
</feature>
<feature type="binding site" evidence="1">
    <location>
        <position position="118"/>
    </location>
    <ligand>
        <name>(6S)-5,6,7,8-tetrahydrofolate</name>
        <dbReference type="ChEBI" id="CHEBI:57453"/>
    </ligand>
</feature>
<feature type="binding site" evidence="1">
    <location>
        <begin position="122"/>
        <end position="124"/>
    </location>
    <ligand>
        <name>(6S)-5,6,7,8-tetrahydrofolate</name>
        <dbReference type="ChEBI" id="CHEBI:57453"/>
    </ligand>
</feature>
<feature type="site" description="Plays an important role in substrate specificity" evidence="1">
    <location>
        <position position="226"/>
    </location>
</feature>
<feature type="modified residue" description="N6-(pyridoxal phosphate)lysine" evidence="1">
    <location>
        <position position="227"/>
    </location>
</feature>